<protein>
    <recommendedName>
        <fullName>Increased rDNA silencing protein 4</fullName>
    </recommendedName>
</protein>
<feature type="chain" id="PRO_0000308754" description="Increased rDNA silencing protein 4">
    <location>
        <begin position="1"/>
        <end position="741"/>
    </location>
</feature>
<feature type="domain" description="EH" evidence="2">
    <location>
        <begin position="629"/>
        <end position="718"/>
    </location>
</feature>
<feature type="region of interest" description="Disordered" evidence="3">
    <location>
        <begin position="18"/>
        <end position="151"/>
    </location>
</feature>
<feature type="region of interest" description="Disordered" evidence="3">
    <location>
        <begin position="183"/>
        <end position="567"/>
    </location>
</feature>
<feature type="region of interest" description="Disordered" evidence="3">
    <location>
        <begin position="603"/>
        <end position="641"/>
    </location>
</feature>
<feature type="compositionally biased region" description="Gly residues" evidence="3">
    <location>
        <begin position="26"/>
        <end position="36"/>
    </location>
</feature>
<feature type="compositionally biased region" description="Gly residues" evidence="3">
    <location>
        <begin position="46"/>
        <end position="65"/>
    </location>
</feature>
<feature type="compositionally biased region" description="Gly residues" evidence="3">
    <location>
        <begin position="94"/>
        <end position="104"/>
    </location>
</feature>
<feature type="compositionally biased region" description="Basic and acidic residues" evidence="3">
    <location>
        <begin position="183"/>
        <end position="195"/>
    </location>
</feature>
<feature type="compositionally biased region" description="Basic and acidic residues" evidence="3">
    <location>
        <begin position="202"/>
        <end position="218"/>
    </location>
</feature>
<feature type="compositionally biased region" description="Basic residues" evidence="3">
    <location>
        <begin position="224"/>
        <end position="233"/>
    </location>
</feature>
<feature type="compositionally biased region" description="Basic and acidic residues" evidence="3">
    <location>
        <begin position="268"/>
        <end position="280"/>
    </location>
</feature>
<feature type="compositionally biased region" description="Pro residues" evidence="3">
    <location>
        <begin position="303"/>
        <end position="312"/>
    </location>
</feature>
<feature type="compositionally biased region" description="Basic and acidic residues" evidence="3">
    <location>
        <begin position="367"/>
        <end position="376"/>
    </location>
</feature>
<feature type="compositionally biased region" description="Low complexity" evidence="3">
    <location>
        <begin position="385"/>
        <end position="406"/>
    </location>
</feature>
<feature type="compositionally biased region" description="Polar residues" evidence="3">
    <location>
        <begin position="436"/>
        <end position="461"/>
    </location>
</feature>
<feature type="compositionally biased region" description="Polar residues" evidence="3">
    <location>
        <begin position="495"/>
        <end position="525"/>
    </location>
</feature>
<feature type="compositionally biased region" description="Basic residues" evidence="3">
    <location>
        <begin position="539"/>
        <end position="566"/>
    </location>
</feature>
<feature type="compositionally biased region" description="Low complexity" evidence="3">
    <location>
        <begin position="603"/>
        <end position="616"/>
    </location>
</feature>
<feature type="compositionally biased region" description="Basic and acidic residues" evidence="3">
    <location>
        <begin position="624"/>
        <end position="633"/>
    </location>
</feature>
<dbReference type="EMBL" id="CH408030">
    <property type="protein sequence ID" value="EAQ91148.1"/>
    <property type="molecule type" value="Genomic_DNA"/>
</dbReference>
<dbReference type="RefSeq" id="XP_001229599.1">
    <property type="nucleotide sequence ID" value="XM_001229598.1"/>
</dbReference>
<dbReference type="SMR" id="Q2H9M1"/>
<dbReference type="STRING" id="306901.Q2H9M1"/>
<dbReference type="GeneID" id="4389348"/>
<dbReference type="VEuPathDB" id="FungiDB:CHGG_03083"/>
<dbReference type="eggNOG" id="KOG0998">
    <property type="taxonomic scope" value="Eukaryota"/>
</dbReference>
<dbReference type="HOGENOM" id="CLU_014603_0_0_1"/>
<dbReference type="InParanoid" id="Q2H9M1"/>
<dbReference type="OMA" id="AEVWELV"/>
<dbReference type="OrthoDB" id="10045710at2759"/>
<dbReference type="Proteomes" id="UP000001056">
    <property type="component" value="Unassembled WGS sequence"/>
</dbReference>
<dbReference type="GO" id="GO:0006629">
    <property type="term" value="P:lipid metabolic process"/>
    <property type="evidence" value="ECO:0007669"/>
    <property type="project" value="UniProtKB-KW"/>
</dbReference>
<dbReference type="CDD" id="cd00052">
    <property type="entry name" value="EH"/>
    <property type="match status" value="1"/>
</dbReference>
<dbReference type="Gene3D" id="1.10.238.10">
    <property type="entry name" value="EF-hand"/>
    <property type="match status" value="1"/>
</dbReference>
<dbReference type="InterPro" id="IPR011992">
    <property type="entry name" value="EF-hand-dom_pair"/>
</dbReference>
<dbReference type="InterPro" id="IPR000261">
    <property type="entry name" value="EH_dom"/>
</dbReference>
<dbReference type="Pfam" id="PF12763">
    <property type="entry name" value="EH"/>
    <property type="match status" value="1"/>
</dbReference>
<dbReference type="SMART" id="SM00027">
    <property type="entry name" value="EH"/>
    <property type="match status" value="1"/>
</dbReference>
<dbReference type="SUPFAM" id="SSF47473">
    <property type="entry name" value="EF-hand"/>
    <property type="match status" value="1"/>
</dbReference>
<dbReference type="PROSITE" id="PS50031">
    <property type="entry name" value="EH"/>
    <property type="match status" value="1"/>
</dbReference>
<proteinExistence type="inferred from homology"/>
<reference key="1">
    <citation type="journal article" date="2015" name="Genome Announc.">
        <title>Draft genome sequence of the cellulolytic fungus Chaetomium globosum.</title>
        <authorList>
            <person name="Cuomo C.A."/>
            <person name="Untereiner W.A."/>
            <person name="Ma L.-J."/>
            <person name="Grabherr M."/>
            <person name="Birren B.W."/>
        </authorList>
    </citation>
    <scope>NUCLEOTIDE SEQUENCE [LARGE SCALE GENOMIC DNA]</scope>
    <source>
        <strain>ATCC 6205 / CBS 148.51 / DSM 1962 / NBRC 6347 / NRRL 1970</strain>
    </source>
</reference>
<name>IRS4_CHAGB</name>
<keyword id="KW-0443">Lipid metabolism</keyword>
<keyword id="KW-1185">Reference proteome</keyword>
<accession>Q2H9M1</accession>
<organism>
    <name type="scientific">Chaetomium globosum (strain ATCC 6205 / CBS 148.51 / DSM 1962 / NBRC 6347 / NRRL 1970)</name>
    <name type="common">Soil fungus</name>
    <dbReference type="NCBI Taxonomy" id="306901"/>
    <lineage>
        <taxon>Eukaryota</taxon>
        <taxon>Fungi</taxon>
        <taxon>Dikarya</taxon>
        <taxon>Ascomycota</taxon>
        <taxon>Pezizomycotina</taxon>
        <taxon>Sordariomycetes</taxon>
        <taxon>Sordariomycetidae</taxon>
        <taxon>Sordariales</taxon>
        <taxon>Chaetomiaceae</taxon>
        <taxon>Chaetomium</taxon>
    </lineage>
</organism>
<comment type="function">
    <text evidence="1">Positive regulator of phosphatidylinositol 4,5-bisphosphate turnover and negatively regulates signaling through the cell integrity pathway. Involved in rDNA silencing (By similarity).</text>
</comment>
<comment type="similarity">
    <text evidence="4">Belongs to the IRS4 family.</text>
</comment>
<gene>
    <name type="primary">IRS4</name>
    <name type="ORF">CHGG_03083</name>
</gene>
<evidence type="ECO:0000250" key="1"/>
<evidence type="ECO:0000255" key="2">
    <source>
        <dbReference type="PROSITE-ProRule" id="PRU00077"/>
    </source>
</evidence>
<evidence type="ECO:0000256" key="3">
    <source>
        <dbReference type="SAM" id="MobiDB-lite"/>
    </source>
</evidence>
<evidence type="ECO:0000305" key="4"/>
<sequence length="741" mass="77173">MGAGLAPRGANGALLAATQAARGHAAAGGGNKGVNEGGSAAAAVGAGTGSGSGLDGGHGHGGGLVGQRVLDLHAGSGSGGGGSTLLPPPAGRSGADGGGGGGGRKSSPSLIAATLAASRSVSPARGPIPQLDLNGGGGKVTRKRGQSVGAASVIVGSVGPRHEAEVLDTASIPPTTSLVSLFEGKREANDVDPVKKRAPSVRRKDMDTEEQARKERASQEPQKVKPKPVPKPKPKPEVATDVAVPKSSDDAHGASEGTSRLGGTGRSGHGDERGRAEAKPSQRRARSQHSEHKPAKKPKPAQHRPPTPPPSLPTRSPSNHVVSQPKRVAKTPRLEPPTPPVKTSTIAKMAEPIVQVTPVEPDIDQVDVFHHQDRNPKPRQVSQGSTSSNDSFVSASSVPSGAVSPVREVESTPRRPAPPARSPSSRSISTPNPPRQQASHPSTPNLTLSSLTNAMMASNLASARLTPTTPSQPPPLPAPRRSGRSPLQPHHTADSIGSQLTGGSKSPNHAAHQQKQRTGMLQTLRSPHASLSDDEDARRQHHHRRRSKVLSGGNRKHAHHEGSRRRWRDEITARERKRYEAVWASNRGLFLRPGWAAQYQNTTTATTGGASPTQQGHGPGTGEETQHQTRDQAVEASRASHGAEAELVVNVVARDIWSRSRLPADELAEVWDLVDRGARGALGRDEFVVGLWLIDQRLRGRKIPARVSQSVWDSAAGGYQGVVVPLPGGGAGGGGRKGRRA</sequence>